<feature type="chain" id="PRO_0000297949" description="Protein DOP1B">
    <location>
        <begin position="1"/>
        <end position="2295"/>
    </location>
</feature>
<feature type="region of interest" description="Disordered" evidence="3">
    <location>
        <begin position="574"/>
        <end position="599"/>
    </location>
</feature>
<feature type="region of interest" description="Disordered" evidence="3">
    <location>
        <begin position="651"/>
        <end position="684"/>
    </location>
</feature>
<feature type="region of interest" description="Disordered" evidence="3">
    <location>
        <begin position="1034"/>
        <end position="1059"/>
    </location>
</feature>
<feature type="region of interest" description="Disordered" evidence="3">
    <location>
        <begin position="1092"/>
        <end position="1136"/>
    </location>
</feature>
<feature type="compositionally biased region" description="Polar residues" evidence="3">
    <location>
        <begin position="1111"/>
        <end position="1131"/>
    </location>
</feature>
<feature type="modified residue" description="Phosphoserine" evidence="9">
    <location>
        <position position="556"/>
    </location>
</feature>
<feature type="modified residue" description="Phosphoserine" evidence="9">
    <location>
        <position position="597"/>
    </location>
</feature>
<feature type="modified residue" description="Phosphoserine" evidence="8 9">
    <location>
        <position position="1167"/>
    </location>
</feature>
<feature type="splice variant" id="VSP_027430" description="In isoform 2." evidence="5">
    <location>
        <begin position="1"/>
        <end position="118"/>
    </location>
</feature>
<feature type="sequence conflict" description="In Ref. 1; BAE27801." evidence="6" ref="1">
    <original>H</original>
    <variation>Y</variation>
    <location>
        <position position="721"/>
    </location>
</feature>
<feature type="sequence conflict" description="In Ref. 1; BAE27801." evidence="6" ref="1">
    <original>W</original>
    <variation>G</variation>
    <location>
        <position position="791"/>
    </location>
</feature>
<feature type="sequence conflict" description="In Ref. 1; BAE27801." evidence="6" ref="1">
    <original>T</original>
    <variation>S</variation>
    <location>
        <position position="1251"/>
    </location>
</feature>
<feature type="sequence conflict" description="In Ref. 1; BAE27979." evidence="6" ref="1">
    <original>S</original>
    <variation>TG</variation>
    <location>
        <position position="1876"/>
    </location>
</feature>
<feature type="sequence conflict" description="In Ref. 1; BAE27801." evidence="6" ref="1">
    <original>S</original>
    <variation>P</variation>
    <location>
        <position position="1881"/>
    </location>
</feature>
<name>DOP1B_MOUSE</name>
<proteinExistence type="evidence at protein level"/>
<evidence type="ECO:0000250" key="1">
    <source>
        <dbReference type="UniProtKB" id="Q03921"/>
    </source>
</evidence>
<evidence type="ECO:0000250" key="2">
    <source>
        <dbReference type="UniProtKB" id="Q9Y3R5"/>
    </source>
</evidence>
<evidence type="ECO:0000256" key="3">
    <source>
        <dbReference type="SAM" id="MobiDB-lite"/>
    </source>
</evidence>
<evidence type="ECO:0000269" key="4">
    <source>
    </source>
</evidence>
<evidence type="ECO:0000303" key="5">
    <source>
    </source>
</evidence>
<evidence type="ECO:0000305" key="6"/>
<evidence type="ECO:0000312" key="7">
    <source>
        <dbReference type="MGI" id="MGI:1917278"/>
    </source>
</evidence>
<evidence type="ECO:0007744" key="8">
    <source>
    </source>
</evidence>
<evidence type="ECO:0007744" key="9">
    <source>
    </source>
</evidence>
<sequence length="2295" mass="257483">MDPEEQELLNDYRYRSYSSVIEKALRNFESSSEWADLISSLGKLNKALQSNLKYSLLPRRLIISKRLAQCLHPALPSGVHLKALETYEIIFKIVGTKWLAKDLFLYSCGLFPLLAYAAMSVRPVLLGLYEKYFLPLQKLLLPSLQAFLVGLLPGLEEGSEIYERTDALLLRLSVVVGREVFYAALWGSVLTSPSIRLPASLFVVNHISRDSPGKEQKCMLGTDYQLTVRSLCASLLDANVLVQRNNLEIILFFFPFYTCLDPEERAIPLLRRDVVHILSAATQTLLRRDMSLNRRLYAWLLGSDIKGNTIVPKSEISNSYEDQCSYFFDKYSKDLLVEALAEILHQKFLDADLEERHHAYLKPFRILVSLLDKPEIGPQVVENLFLEVIRAFYSYCHDVLGSDLKLSYTQSGNPLISTIKENRHASEIVKTVNLLVSSLSSDFLWDYMARRFEACFRPVTQTTAIGEAISPPPTVSELCTLLVFLLDVIPLELYSEVQTQYLPQVLGCLLQPLAEEVEALSLPELTHALKTCFKVLSKVQMPPSYLDLEPSSGNSSPVKGRNSGIAMETEAVVAGDEEPSFPPLKSEDSGIGLSASSPELSEHLRVPRVSAERDDIWKKDGTMQATFLCIQELIANFASKNIFAASLTVSGEENKPEEPPGKGNKGQTQSTEHPGRKSSWDPKPITVPQFKQMLSDLFTVRGSPFKTRSSESLSSVPSSPHRKAATEWGVDQVVVELVGSKEDCREALAAACHLLLDCATFPVYLSEEETEQLCETLFQTPGASDCSFPPWLKSLMTICCCVSDCSLQNIAIATLLEVINHSQSLALVIEDKMKRYKTSGNNPFFGKLQMVTVPPIAPGILKVIAEKTDFYQRVARVLWNQLNKETREHHITCVELFYRLHCLAPTANICEDIICHALLDPDKGTRLEALFRFSVIWHLTREIQGSRVTSHNRSFDRSLFVVLDSLACTDGAISAAAQGWLVRALSLGDVARILEPMLLLLLQPKTQRTSIQCLKQENSAEDLHRWFNRKKPTCKEACGESEPQEGAPEERLPRGQFTTVDREAIWAEVEKEPEKCPPRSDLSEEDLPYYVDLPDRMTSGGGDSSEHTESADTSSGHTDSENTSTFSSPSHDLQDLSHEENCCAPIPIGGRAYSKRAALLAAFQPESPRSNARLSLVRADSDKTQASESFSSDEEADVELQAITTSRLLKQQREKQETVEALFKHILLYLQPYDSQRVLYAFSVLEAVLKTNPKEFIEAVSRTGIDTSSTAHLNLISNLLARHQEALIGQSFYGKLQTQAPNVCPHSLLIELLTYLCLSFLRSYYPCYLKVCHRDILGNRDVQVKSVEVLIRITAQLVSMAKSAEGKNTEFIHSLLQRCKVQEFVLLSLSASMYTSQKRYGLATADRGGRLLAEDSLFEESLINLGQDQIWSEHPLQIELLKLLQALIVLEHHLGQGQEEAETQPALSREWQRALNFQQAIGAMQYVQPHPLTSQGLLVSAVVRGLQPAYGYGMHPAWVSLVTHSLPYFGKSLGWTVTPFVIQICKNLDDLVKQYESESVKFTISTTSKKENISPDYPLTLLEGLTTISHFCLLEQPTQHKKTAAVSDPINLRNAKNAILEELPRIVNTMALIWNVLRKEETQKRPVDLLGATKGSSSVYFKTTKTIRQKILDLLNPLTGHLGVQLIAAVATVWNRKQARRHSKTKMVPVANTSQHTLVDLVCALSTLQTDSVLQLVKEVVKRPAQIKGDEKSPLVDIPVLQFCYAFIQRLSIPDLQEAFPSLLGVLKEAAQLNLAPPGYFLLLSMLNDFVTRTPNLESKKDQKDLQEITQRILEAVGTIAGSSLEQTSWLSRNLEVKAQPQVSLEESDAEDDVHSAAEASTMVSASAPSVYSVQALSLLAEVLASLLDMVYRSDEKEKAVPLISRLLYYVFPYLRNHSAYNAPSFRAGAQLLSSLSGYAYTKRAWKKEVLELFLDPAFFQMDTSCVHWKSVIDHLLTHEKTMFKDLMNMQSSSLKLFSSFEQKAMLLKRQAFAVFSGELDQYHLYLPLIQERLTDNLRVGQTSIVAGQMFLFFRVLLLRISPQHLTSLWPIMVSELIQTFIQLEEDLKEEDESRNSHKSNRIKAPVADGNGSAGRVLSPSDLTMYLSACKFLDTALAFPPDKMPLFQIYRWAFVPEVDTEHPAFLSELEENHQECRPHTVRILELLRSRYGEIGSSDEITRKKEFPLLRQHSVSCIRQLIPFFTTLNCAFKTQSQLPADVPGTAAPECPVTENPRVLRQLEECVEQDFLEHPEC</sequence>
<reference key="1">
    <citation type="journal article" date="2005" name="Science">
        <title>The transcriptional landscape of the mammalian genome.</title>
        <authorList>
            <person name="Carninci P."/>
            <person name="Kasukawa T."/>
            <person name="Katayama S."/>
            <person name="Gough J."/>
            <person name="Frith M.C."/>
            <person name="Maeda N."/>
            <person name="Oyama R."/>
            <person name="Ravasi T."/>
            <person name="Lenhard B."/>
            <person name="Wells C."/>
            <person name="Kodzius R."/>
            <person name="Shimokawa K."/>
            <person name="Bajic V.B."/>
            <person name="Brenner S.E."/>
            <person name="Batalov S."/>
            <person name="Forrest A.R."/>
            <person name="Zavolan M."/>
            <person name="Davis M.J."/>
            <person name="Wilming L.G."/>
            <person name="Aidinis V."/>
            <person name="Allen J.E."/>
            <person name="Ambesi-Impiombato A."/>
            <person name="Apweiler R."/>
            <person name="Aturaliya R.N."/>
            <person name="Bailey T.L."/>
            <person name="Bansal M."/>
            <person name="Baxter L."/>
            <person name="Beisel K.W."/>
            <person name="Bersano T."/>
            <person name="Bono H."/>
            <person name="Chalk A.M."/>
            <person name="Chiu K.P."/>
            <person name="Choudhary V."/>
            <person name="Christoffels A."/>
            <person name="Clutterbuck D.R."/>
            <person name="Crowe M.L."/>
            <person name="Dalla E."/>
            <person name="Dalrymple B.P."/>
            <person name="de Bono B."/>
            <person name="Della Gatta G."/>
            <person name="di Bernardo D."/>
            <person name="Down T."/>
            <person name="Engstrom P."/>
            <person name="Fagiolini M."/>
            <person name="Faulkner G."/>
            <person name="Fletcher C.F."/>
            <person name="Fukushima T."/>
            <person name="Furuno M."/>
            <person name="Futaki S."/>
            <person name="Gariboldi M."/>
            <person name="Georgii-Hemming P."/>
            <person name="Gingeras T.R."/>
            <person name="Gojobori T."/>
            <person name="Green R.E."/>
            <person name="Gustincich S."/>
            <person name="Harbers M."/>
            <person name="Hayashi Y."/>
            <person name="Hensch T.K."/>
            <person name="Hirokawa N."/>
            <person name="Hill D."/>
            <person name="Huminiecki L."/>
            <person name="Iacono M."/>
            <person name="Ikeo K."/>
            <person name="Iwama A."/>
            <person name="Ishikawa T."/>
            <person name="Jakt M."/>
            <person name="Kanapin A."/>
            <person name="Katoh M."/>
            <person name="Kawasawa Y."/>
            <person name="Kelso J."/>
            <person name="Kitamura H."/>
            <person name="Kitano H."/>
            <person name="Kollias G."/>
            <person name="Krishnan S.P."/>
            <person name="Kruger A."/>
            <person name="Kummerfeld S.K."/>
            <person name="Kurochkin I.V."/>
            <person name="Lareau L.F."/>
            <person name="Lazarevic D."/>
            <person name="Lipovich L."/>
            <person name="Liu J."/>
            <person name="Liuni S."/>
            <person name="McWilliam S."/>
            <person name="Madan Babu M."/>
            <person name="Madera M."/>
            <person name="Marchionni L."/>
            <person name="Matsuda H."/>
            <person name="Matsuzawa S."/>
            <person name="Miki H."/>
            <person name="Mignone F."/>
            <person name="Miyake S."/>
            <person name="Morris K."/>
            <person name="Mottagui-Tabar S."/>
            <person name="Mulder N."/>
            <person name="Nakano N."/>
            <person name="Nakauchi H."/>
            <person name="Ng P."/>
            <person name="Nilsson R."/>
            <person name="Nishiguchi S."/>
            <person name="Nishikawa S."/>
            <person name="Nori F."/>
            <person name="Ohara O."/>
            <person name="Okazaki Y."/>
            <person name="Orlando V."/>
            <person name="Pang K.C."/>
            <person name="Pavan W.J."/>
            <person name="Pavesi G."/>
            <person name="Pesole G."/>
            <person name="Petrovsky N."/>
            <person name="Piazza S."/>
            <person name="Reed J."/>
            <person name="Reid J.F."/>
            <person name="Ring B.Z."/>
            <person name="Ringwald M."/>
            <person name="Rost B."/>
            <person name="Ruan Y."/>
            <person name="Salzberg S.L."/>
            <person name="Sandelin A."/>
            <person name="Schneider C."/>
            <person name="Schoenbach C."/>
            <person name="Sekiguchi K."/>
            <person name="Semple C.A."/>
            <person name="Seno S."/>
            <person name="Sessa L."/>
            <person name="Sheng Y."/>
            <person name="Shibata Y."/>
            <person name="Shimada H."/>
            <person name="Shimada K."/>
            <person name="Silva D."/>
            <person name="Sinclair B."/>
            <person name="Sperling S."/>
            <person name="Stupka E."/>
            <person name="Sugiura K."/>
            <person name="Sultana R."/>
            <person name="Takenaka Y."/>
            <person name="Taki K."/>
            <person name="Tammoja K."/>
            <person name="Tan S.L."/>
            <person name="Tang S."/>
            <person name="Taylor M.S."/>
            <person name="Tegner J."/>
            <person name="Teichmann S.A."/>
            <person name="Ueda H.R."/>
            <person name="van Nimwegen E."/>
            <person name="Verardo R."/>
            <person name="Wei C.L."/>
            <person name="Yagi K."/>
            <person name="Yamanishi H."/>
            <person name="Zabarovsky E."/>
            <person name="Zhu S."/>
            <person name="Zimmer A."/>
            <person name="Hide W."/>
            <person name="Bult C."/>
            <person name="Grimmond S.M."/>
            <person name="Teasdale R.D."/>
            <person name="Liu E.T."/>
            <person name="Brusic V."/>
            <person name="Quackenbush J."/>
            <person name="Wahlestedt C."/>
            <person name="Mattick J.S."/>
            <person name="Hume D.A."/>
            <person name="Kai C."/>
            <person name="Sasaki D."/>
            <person name="Tomaru Y."/>
            <person name="Fukuda S."/>
            <person name="Kanamori-Katayama M."/>
            <person name="Suzuki M."/>
            <person name="Aoki J."/>
            <person name="Arakawa T."/>
            <person name="Iida J."/>
            <person name="Imamura K."/>
            <person name="Itoh M."/>
            <person name="Kato T."/>
            <person name="Kawaji H."/>
            <person name="Kawagashira N."/>
            <person name="Kawashima T."/>
            <person name="Kojima M."/>
            <person name="Kondo S."/>
            <person name="Konno H."/>
            <person name="Nakano K."/>
            <person name="Ninomiya N."/>
            <person name="Nishio T."/>
            <person name="Okada M."/>
            <person name="Plessy C."/>
            <person name="Shibata K."/>
            <person name="Shiraki T."/>
            <person name="Suzuki S."/>
            <person name="Tagami M."/>
            <person name="Waki K."/>
            <person name="Watahiki A."/>
            <person name="Okamura-Oho Y."/>
            <person name="Suzuki H."/>
            <person name="Kawai J."/>
            <person name="Hayashizaki Y."/>
        </authorList>
    </citation>
    <scope>NUCLEOTIDE SEQUENCE [LARGE SCALE MRNA] (ISOFORMS 1 AND 2)</scope>
    <source>
        <strain>C57BL/6J</strain>
        <tissue>Brain</tissue>
    </source>
</reference>
<reference key="2">
    <citation type="journal article" date="2009" name="PLoS Biol.">
        <title>Lineage-specific biology revealed by a finished genome assembly of the mouse.</title>
        <authorList>
            <person name="Church D.M."/>
            <person name="Goodstadt L."/>
            <person name="Hillier L.W."/>
            <person name="Zody M.C."/>
            <person name="Goldstein S."/>
            <person name="She X."/>
            <person name="Bult C.J."/>
            <person name="Agarwala R."/>
            <person name="Cherry J.L."/>
            <person name="DiCuccio M."/>
            <person name="Hlavina W."/>
            <person name="Kapustin Y."/>
            <person name="Meric P."/>
            <person name="Maglott D."/>
            <person name="Birtle Z."/>
            <person name="Marques A.C."/>
            <person name="Graves T."/>
            <person name="Zhou S."/>
            <person name="Teague B."/>
            <person name="Potamousis K."/>
            <person name="Churas C."/>
            <person name="Place M."/>
            <person name="Herschleb J."/>
            <person name="Runnheim R."/>
            <person name="Forrest D."/>
            <person name="Amos-Landgraf J."/>
            <person name="Schwartz D.C."/>
            <person name="Cheng Z."/>
            <person name="Lindblad-Toh K."/>
            <person name="Eichler E.E."/>
            <person name="Ponting C.P."/>
        </authorList>
    </citation>
    <scope>NUCLEOTIDE SEQUENCE [LARGE SCALE GENOMIC DNA]</scope>
    <source>
        <strain>C57BL/6J</strain>
    </source>
</reference>
<reference key="3">
    <citation type="journal article" date="2003" name="DNA Res.">
        <title>Prediction of the coding sequences of mouse homologues of KIAA gene: II. The complete nucleotide sequences of 400 mouse KIAA-homologous cDNAs identified by screening of terminal sequences of cDNA clones randomly sampled from size-fractionated libraries.</title>
        <authorList>
            <person name="Okazaki N."/>
            <person name="Kikuno R."/>
            <person name="Ohara R."/>
            <person name="Inamoto S."/>
            <person name="Aizawa H."/>
            <person name="Yuasa S."/>
            <person name="Nakajima D."/>
            <person name="Nagase T."/>
            <person name="Ohara O."/>
            <person name="Koga H."/>
        </authorList>
    </citation>
    <scope>NUCLEOTIDE SEQUENCE [LARGE SCALE MRNA] OF 740-2295 (ISOFORMS 1/2)</scope>
</reference>
<reference key="4">
    <citation type="journal article" date="2003" name="Biochem. Biophys. Res. Commun.">
        <title>The differentially expressed C21orf5 gene in the medial temporal-lobe system could play a role in mental retardation in Down syndrome and transgenic mice.</title>
        <authorList>
            <person name="Lopes C."/>
            <person name="Chettouh Z."/>
            <person name="Delabar J.-M."/>
            <person name="Rachidi M."/>
        </authorList>
    </citation>
    <scope>TISSUE SPECIFICITY</scope>
    <scope>DEVELOPMENTAL STAGE</scope>
</reference>
<reference key="5">
    <citation type="journal article" date="2007" name="Proc. Natl. Acad. Sci. U.S.A.">
        <title>Large-scale phosphorylation analysis of mouse liver.</title>
        <authorList>
            <person name="Villen J."/>
            <person name="Beausoleil S.A."/>
            <person name="Gerber S.A."/>
            <person name="Gygi S.P."/>
        </authorList>
    </citation>
    <scope>PHOSPHORYLATION [LARGE SCALE ANALYSIS] AT SER-1167</scope>
    <scope>IDENTIFICATION BY MASS SPECTROMETRY [LARGE SCALE ANALYSIS]</scope>
    <source>
        <tissue>Liver</tissue>
    </source>
</reference>
<reference key="6">
    <citation type="journal article" date="2010" name="Cell">
        <title>A tissue-specific atlas of mouse protein phosphorylation and expression.</title>
        <authorList>
            <person name="Huttlin E.L."/>
            <person name="Jedrychowski M.P."/>
            <person name="Elias J.E."/>
            <person name="Goswami T."/>
            <person name="Rad R."/>
            <person name="Beausoleil S.A."/>
            <person name="Villen J."/>
            <person name="Haas W."/>
            <person name="Sowa M.E."/>
            <person name="Gygi S.P."/>
        </authorList>
    </citation>
    <scope>PHOSPHORYLATION [LARGE SCALE ANALYSIS] AT SER-556; SER-597 AND SER-1167</scope>
    <scope>IDENTIFICATION BY MASS SPECTROMETRY [LARGE SCALE ANALYSIS]</scope>
    <source>
        <tissue>Brain</tissue>
        <tissue>Heart</tissue>
        <tissue>Kidney</tissue>
        <tissue>Liver</tissue>
        <tissue>Lung</tissue>
        <tissue>Spleen</tissue>
        <tissue>Testis</tissue>
    </source>
</reference>
<organism>
    <name type="scientific">Mus musculus</name>
    <name type="common">Mouse</name>
    <dbReference type="NCBI Taxonomy" id="10090"/>
    <lineage>
        <taxon>Eukaryota</taxon>
        <taxon>Metazoa</taxon>
        <taxon>Chordata</taxon>
        <taxon>Craniata</taxon>
        <taxon>Vertebrata</taxon>
        <taxon>Euteleostomi</taxon>
        <taxon>Mammalia</taxon>
        <taxon>Eutheria</taxon>
        <taxon>Euarchontoglires</taxon>
        <taxon>Glires</taxon>
        <taxon>Rodentia</taxon>
        <taxon>Myomorpha</taxon>
        <taxon>Muroidea</taxon>
        <taxon>Muridae</taxon>
        <taxon>Murinae</taxon>
        <taxon>Mus</taxon>
        <taxon>Mus</taxon>
    </lineage>
</organism>
<dbReference type="EMBL" id="AK147255">
    <property type="protein sequence ID" value="BAE27801.1"/>
    <property type="molecule type" value="mRNA"/>
</dbReference>
<dbReference type="EMBL" id="AK147536">
    <property type="protein sequence ID" value="BAE27979.1"/>
    <property type="molecule type" value="mRNA"/>
</dbReference>
<dbReference type="EMBL" id="AC154449">
    <property type="status" value="NOT_ANNOTATED_CDS"/>
    <property type="molecule type" value="Genomic_DNA"/>
</dbReference>
<dbReference type="EMBL" id="AC168220">
    <property type="status" value="NOT_ANNOTATED_CDS"/>
    <property type="molecule type" value="Genomic_DNA"/>
</dbReference>
<dbReference type="EMBL" id="AK122403">
    <property type="protein sequence ID" value="BAC65685.1"/>
    <property type="molecule type" value="mRNA"/>
</dbReference>
<dbReference type="CCDS" id="CCDS28343.1">
    <molecule id="Q3UHQ6-1"/>
</dbReference>
<dbReference type="RefSeq" id="NP_080976.1">
    <property type="nucleotide sequence ID" value="NM_026700.2"/>
</dbReference>
<dbReference type="RefSeq" id="NP_081569.1">
    <molecule id="Q3UHQ6-1"/>
    <property type="nucleotide sequence ID" value="NM_027293.1"/>
</dbReference>
<dbReference type="RefSeq" id="XP_006523145.1">
    <property type="nucleotide sequence ID" value="XM_006523082.3"/>
</dbReference>
<dbReference type="FunCoup" id="Q3UHQ6">
    <property type="interactions" value="1016"/>
</dbReference>
<dbReference type="STRING" id="10090.ENSMUSP00000044437"/>
<dbReference type="GlyGen" id="Q3UHQ6">
    <property type="glycosylation" value="2 sites, 1 O-linked glycan (1 site)"/>
</dbReference>
<dbReference type="iPTMnet" id="Q3UHQ6"/>
<dbReference type="PhosphoSitePlus" id="Q3UHQ6"/>
<dbReference type="jPOST" id="Q3UHQ6"/>
<dbReference type="PaxDb" id="10090-ENSMUSP00000044437"/>
<dbReference type="PeptideAtlas" id="Q3UHQ6"/>
<dbReference type="ProteomicsDB" id="279469">
    <molecule id="Q3UHQ6-1"/>
</dbReference>
<dbReference type="ProteomicsDB" id="279470">
    <molecule id="Q3UHQ6-2"/>
</dbReference>
<dbReference type="Pumba" id="Q3UHQ6"/>
<dbReference type="Antibodypedia" id="54117">
    <property type="antibodies" value="20 antibodies from 10 providers"/>
</dbReference>
<dbReference type="DNASU" id="70028"/>
<dbReference type="Ensembl" id="ENSMUST00000045004.11">
    <molecule id="Q3UHQ6-1"/>
    <property type="protein sequence ID" value="ENSMUSP00000044437.10"/>
    <property type="gene ID" value="ENSMUSG00000022946.11"/>
</dbReference>
<dbReference type="GeneID" id="70028"/>
<dbReference type="KEGG" id="mmu:70028"/>
<dbReference type="UCSC" id="uc007zzv.1">
    <molecule id="Q3UHQ6-1"/>
    <property type="organism name" value="mouse"/>
</dbReference>
<dbReference type="AGR" id="MGI:1917278"/>
<dbReference type="CTD" id="9980"/>
<dbReference type="MGI" id="MGI:1917278">
    <property type="gene designation" value="Dop1b"/>
</dbReference>
<dbReference type="VEuPathDB" id="HostDB:ENSMUSG00000022946"/>
<dbReference type="eggNOG" id="KOG3613">
    <property type="taxonomic scope" value="Eukaryota"/>
</dbReference>
<dbReference type="GeneTree" id="ENSGT00390000016421"/>
<dbReference type="HOGENOM" id="CLU_001045_0_0_1"/>
<dbReference type="InParanoid" id="Q3UHQ6"/>
<dbReference type="OMA" id="LWEYMTQ"/>
<dbReference type="OrthoDB" id="297643at2759"/>
<dbReference type="PhylomeDB" id="Q3UHQ6"/>
<dbReference type="TreeFam" id="TF316855"/>
<dbReference type="BioGRID-ORCS" id="70028">
    <property type="hits" value="1 hit in 76 CRISPR screens"/>
</dbReference>
<dbReference type="ChiTaRS" id="Dop1b">
    <property type="organism name" value="mouse"/>
</dbReference>
<dbReference type="PRO" id="PR:Q3UHQ6"/>
<dbReference type="Proteomes" id="UP000000589">
    <property type="component" value="Chromosome 16"/>
</dbReference>
<dbReference type="RNAct" id="Q3UHQ6">
    <property type="molecule type" value="protein"/>
</dbReference>
<dbReference type="Bgee" id="ENSMUSG00000022946">
    <property type="expression patterns" value="Expressed in granulocyte and 243 other cell types or tissues"/>
</dbReference>
<dbReference type="ExpressionAtlas" id="Q3UHQ6">
    <property type="expression patterns" value="baseline and differential"/>
</dbReference>
<dbReference type="GO" id="GO:0005829">
    <property type="term" value="C:cytosol"/>
    <property type="evidence" value="ECO:0007669"/>
    <property type="project" value="GOC"/>
</dbReference>
<dbReference type="GO" id="GO:0031901">
    <property type="term" value="C:early endosome membrane"/>
    <property type="evidence" value="ECO:0000250"/>
    <property type="project" value="UniProtKB"/>
</dbReference>
<dbReference type="GO" id="GO:0000139">
    <property type="term" value="C:Golgi membrane"/>
    <property type="evidence" value="ECO:0007669"/>
    <property type="project" value="UniProtKB-SubCell"/>
</dbReference>
<dbReference type="GO" id="GO:0050890">
    <property type="term" value="P:cognition"/>
    <property type="evidence" value="ECO:0007669"/>
    <property type="project" value="Ensembl"/>
</dbReference>
<dbReference type="GO" id="GO:0009880">
    <property type="term" value="P:embryonic pattern specification"/>
    <property type="evidence" value="ECO:0007669"/>
    <property type="project" value="Ensembl"/>
</dbReference>
<dbReference type="GO" id="GO:0006895">
    <property type="term" value="P:Golgi to endosome transport"/>
    <property type="evidence" value="ECO:0007669"/>
    <property type="project" value="InterPro"/>
</dbReference>
<dbReference type="GO" id="GO:0015031">
    <property type="term" value="P:protein transport"/>
    <property type="evidence" value="ECO:0007669"/>
    <property type="project" value="UniProtKB-KW"/>
</dbReference>
<dbReference type="InterPro" id="IPR040314">
    <property type="entry name" value="DOP1"/>
</dbReference>
<dbReference type="InterPro" id="IPR056457">
    <property type="entry name" value="DOP1_C"/>
</dbReference>
<dbReference type="InterPro" id="IPR007249">
    <property type="entry name" value="DOP1_N"/>
</dbReference>
<dbReference type="InterPro" id="IPR056459">
    <property type="entry name" value="TPR_DOP1"/>
</dbReference>
<dbReference type="InterPro" id="IPR056458">
    <property type="entry name" value="TPR_DOP1_M"/>
</dbReference>
<dbReference type="PANTHER" id="PTHR14042">
    <property type="entry name" value="DOPEY-RELATED"/>
    <property type="match status" value="1"/>
</dbReference>
<dbReference type="PANTHER" id="PTHR14042:SF23">
    <property type="entry name" value="PROTEIN DOPEY-2"/>
    <property type="match status" value="1"/>
</dbReference>
<dbReference type="Pfam" id="PF24598">
    <property type="entry name" value="DOP1_C"/>
    <property type="match status" value="1"/>
</dbReference>
<dbReference type="Pfam" id="PF04118">
    <property type="entry name" value="Dopey_N"/>
    <property type="match status" value="1"/>
</dbReference>
<dbReference type="Pfam" id="PF24601">
    <property type="entry name" value="TPR_DOP1"/>
    <property type="match status" value="1"/>
</dbReference>
<dbReference type="Pfam" id="PF24597">
    <property type="entry name" value="TPR_DOP1_M"/>
    <property type="match status" value="1"/>
</dbReference>
<comment type="function">
    <text evidence="2">May play a role in regulating membrane trafficking of cargo proteins. Together with ATP9A and MON2, regulates SNX3 retromer-mediated endosomal sorting of WLS away from lysosomal degradation.</text>
</comment>
<comment type="subunit">
    <text evidence="2">Homooligomer. Heterotrimer with ATP9A and MON2; this interaction is retromer-independent. Interacts with SNX3.</text>
</comment>
<comment type="subcellular location">
    <subcellularLocation>
        <location evidence="2">Early endosome membrane</location>
    </subcellularLocation>
    <subcellularLocation>
        <location evidence="1">Golgi apparatus membrane</location>
        <topology evidence="1">Peripheral membrane protein</topology>
    </subcellularLocation>
</comment>
<comment type="alternative products">
    <event type="alternative splicing"/>
    <isoform>
        <id>Q3UHQ6-1</id>
        <name>1</name>
        <sequence type="displayed"/>
    </isoform>
    <isoform>
        <id>Q3UHQ6-2</id>
        <name>2</name>
        <sequence type="described" ref="VSP_027430"/>
    </isoform>
</comment>
<comment type="tissue specificity">
    <text evidence="4">Expressed in liver, heart and brain.</text>
</comment>
<comment type="developmental stage">
    <text evidence="4">Highly expressed in developing nervous system.</text>
</comment>
<comment type="similarity">
    <text evidence="6">Belongs to the DOP1 family.</text>
</comment>
<accession>Q3UHQ6</accession>
<accession>E9QLV2</accession>
<accession>Q3UH78</accession>
<accession>Q80TN8</accession>
<protein>
    <recommendedName>
        <fullName>Protein DOP1B</fullName>
    </recommendedName>
</protein>
<keyword id="KW-0025">Alternative splicing</keyword>
<keyword id="KW-0967">Endosome</keyword>
<keyword id="KW-0333">Golgi apparatus</keyword>
<keyword id="KW-0472">Membrane</keyword>
<keyword id="KW-0597">Phosphoprotein</keyword>
<keyword id="KW-0653">Protein transport</keyword>
<keyword id="KW-1185">Reference proteome</keyword>
<keyword id="KW-0813">Transport</keyword>
<gene>
    <name type="primary">Dop1b</name>
    <name evidence="7" type="synonym">Dopey2</name>
    <name type="synonym">Kiaa0933</name>
</gene>